<proteinExistence type="inferred from homology"/>
<keyword id="KW-0963">Cytoplasm</keyword>
<keyword id="KW-0489">Methyltransferase</keyword>
<keyword id="KW-1185">Reference proteome</keyword>
<keyword id="KW-0949">S-adenosyl-L-methionine</keyword>
<keyword id="KW-0808">Transferase</keyword>
<keyword id="KW-0819">tRNA processing</keyword>
<dbReference type="EC" id="2.1.1.257" evidence="1"/>
<dbReference type="EMBL" id="BA000002">
    <property type="protein sequence ID" value="BAA79775.1"/>
    <property type="molecule type" value="Genomic_DNA"/>
</dbReference>
<dbReference type="PIR" id="G72671">
    <property type="entry name" value="G72671"/>
</dbReference>
<dbReference type="RefSeq" id="WP_010865982.1">
    <property type="nucleotide sequence ID" value="NC_000854.2"/>
</dbReference>
<dbReference type="SMR" id="Q9YDX2"/>
<dbReference type="STRING" id="272557.APE_0797"/>
<dbReference type="EnsemblBacteria" id="BAA79775">
    <property type="protein sequence ID" value="BAA79775"/>
    <property type="gene ID" value="APE_0797"/>
</dbReference>
<dbReference type="GeneID" id="1444906"/>
<dbReference type="KEGG" id="ape:APE_0797"/>
<dbReference type="eggNOG" id="arCOG01239">
    <property type="taxonomic scope" value="Archaea"/>
</dbReference>
<dbReference type="Proteomes" id="UP000002518">
    <property type="component" value="Chromosome"/>
</dbReference>
<dbReference type="GO" id="GO:0005737">
    <property type="term" value="C:cytoplasm"/>
    <property type="evidence" value="ECO:0007669"/>
    <property type="project" value="UniProtKB-SubCell"/>
</dbReference>
<dbReference type="GO" id="GO:0008757">
    <property type="term" value="F:S-adenosylmethionine-dependent methyltransferase activity"/>
    <property type="evidence" value="ECO:0007669"/>
    <property type="project" value="UniProtKB-UniRule"/>
</dbReference>
<dbReference type="GO" id="GO:0008175">
    <property type="term" value="F:tRNA methyltransferase activity"/>
    <property type="evidence" value="ECO:0007669"/>
    <property type="project" value="UniProtKB-UniRule"/>
</dbReference>
<dbReference type="GO" id="GO:0030488">
    <property type="term" value="P:tRNA methylation"/>
    <property type="evidence" value="ECO:0007669"/>
    <property type="project" value="UniProtKB-UniRule"/>
</dbReference>
<dbReference type="CDD" id="cd18087">
    <property type="entry name" value="TrmY-like"/>
    <property type="match status" value="1"/>
</dbReference>
<dbReference type="Gene3D" id="3.40.1280.10">
    <property type="match status" value="1"/>
</dbReference>
<dbReference type="HAMAP" id="MF_00587">
    <property type="entry name" value="tRNA_methyltr_TrmY"/>
    <property type="match status" value="1"/>
</dbReference>
<dbReference type="InterPro" id="IPR029028">
    <property type="entry name" value="Alpha/beta_knot_MTases"/>
</dbReference>
<dbReference type="InterPro" id="IPR007158">
    <property type="entry name" value="TrmY"/>
</dbReference>
<dbReference type="InterPro" id="IPR029026">
    <property type="entry name" value="tRNA_m1G_MTases_N"/>
</dbReference>
<dbReference type="Pfam" id="PF04013">
    <property type="entry name" value="Methyltrn_RNA_2"/>
    <property type="match status" value="1"/>
</dbReference>
<dbReference type="SUPFAM" id="SSF75217">
    <property type="entry name" value="alpha/beta knot"/>
    <property type="match status" value="1"/>
</dbReference>
<organism>
    <name type="scientific">Aeropyrum pernix (strain ATCC 700893 / DSM 11879 / JCM 9820 / NBRC 100138 / K1)</name>
    <dbReference type="NCBI Taxonomy" id="272557"/>
    <lineage>
        <taxon>Archaea</taxon>
        <taxon>Thermoproteota</taxon>
        <taxon>Thermoprotei</taxon>
        <taxon>Desulfurococcales</taxon>
        <taxon>Desulfurococcaceae</taxon>
        <taxon>Aeropyrum</taxon>
    </lineage>
</organism>
<evidence type="ECO:0000255" key="1">
    <source>
        <dbReference type="HAMAP-Rule" id="MF_00587"/>
    </source>
</evidence>
<comment type="function">
    <text evidence="1">Specifically catalyzes the N1-methylation of pseudouridine at position 54 (Psi54) in tRNAs.</text>
</comment>
<comment type="catalytic activity">
    <reaction evidence="1">
        <text>pseudouridine(54) in tRNA + S-adenosyl-L-methionine = N(1)-methylpseudouridine(54) in tRNA + S-adenosyl-L-homocysteine + H(+)</text>
        <dbReference type="Rhea" id="RHEA:55292"/>
        <dbReference type="Rhea" id="RHEA-COMP:14140"/>
        <dbReference type="Rhea" id="RHEA-COMP:14141"/>
        <dbReference type="ChEBI" id="CHEBI:15378"/>
        <dbReference type="ChEBI" id="CHEBI:57856"/>
        <dbReference type="ChEBI" id="CHEBI:59789"/>
        <dbReference type="ChEBI" id="CHEBI:65314"/>
        <dbReference type="ChEBI" id="CHEBI:74890"/>
        <dbReference type="EC" id="2.1.1.257"/>
    </reaction>
</comment>
<comment type="subunit">
    <text evidence="1">Homodimer.</text>
</comment>
<comment type="subcellular location">
    <subcellularLocation>
        <location evidence="1">Cytoplasm</location>
    </subcellularLocation>
</comment>
<comment type="similarity">
    <text evidence="1">Belongs to the methyltransferase superfamily. TrmY family.</text>
</comment>
<gene>
    <name evidence="1" type="primary">trmY</name>
    <name type="ordered locus">APE_0797</name>
</gene>
<feature type="chain" id="PRO_0000157944" description="tRNA (pseudouridine(54)-N(1))-methyltransferase">
    <location>
        <begin position="1"/>
        <end position="192"/>
    </location>
</feature>
<feature type="binding site" evidence="1">
    <location>
        <position position="114"/>
    </location>
    <ligand>
        <name>S-adenosyl-L-methionine</name>
        <dbReference type="ChEBI" id="CHEBI:59789"/>
    </ligand>
</feature>
<feature type="binding site" evidence="1">
    <location>
        <position position="138"/>
    </location>
    <ligand>
        <name>S-adenosyl-L-methionine</name>
        <dbReference type="ChEBI" id="CHEBI:59789"/>
    </ligand>
</feature>
<protein>
    <recommendedName>
        <fullName evidence="1">tRNA (pseudouridine(54)-N(1))-methyltransferase</fullName>
        <ecNumber evidence="1">2.1.1.257</ecNumber>
    </recommendedName>
</protein>
<name>TRMY_AERPE</name>
<accession>Q9YDX2</accession>
<reference key="1">
    <citation type="journal article" date="1999" name="DNA Res.">
        <title>Complete genome sequence of an aerobic hyper-thermophilic crenarchaeon, Aeropyrum pernix K1.</title>
        <authorList>
            <person name="Kawarabayasi Y."/>
            <person name="Hino Y."/>
            <person name="Horikawa H."/>
            <person name="Yamazaki S."/>
            <person name="Haikawa Y."/>
            <person name="Jin-no K."/>
            <person name="Takahashi M."/>
            <person name="Sekine M."/>
            <person name="Baba S."/>
            <person name="Ankai A."/>
            <person name="Kosugi H."/>
            <person name="Hosoyama A."/>
            <person name="Fukui S."/>
            <person name="Nagai Y."/>
            <person name="Nishijima K."/>
            <person name="Nakazawa H."/>
            <person name="Takamiya M."/>
            <person name="Masuda S."/>
            <person name="Funahashi T."/>
            <person name="Tanaka T."/>
            <person name="Kudoh Y."/>
            <person name="Yamazaki J."/>
            <person name="Kushida N."/>
            <person name="Oguchi A."/>
            <person name="Aoki K."/>
            <person name="Kubota K."/>
            <person name="Nakamura Y."/>
            <person name="Nomura N."/>
            <person name="Sako Y."/>
            <person name="Kikuchi H."/>
        </authorList>
    </citation>
    <scope>NUCLEOTIDE SEQUENCE [LARGE SCALE GENOMIC DNA]</scope>
    <source>
        <strain>ATCC 700893 / DSM 11879 / JCM 9820 / NBRC 100138 / K1</strain>
    </source>
</reference>
<sequence length="192" mass="20760">MSLYVVISPTGRTDGNIPARGYAGPSGRLDVIARAYNAILEPNATLAALLMGGPLPPRLLIAPLSCKDIVRSERSFMIEASRALRGRRSCFTVNDEGVEALASLLRRFKPRILLAEKGGDISSHWGEMCSSSPTFIAGSHLDPPHGLIKHLERSLGGFLRVSVGPLSLHTDHVFLLVSALRLPMHATSIEHH</sequence>